<keyword id="KW-0963">Cytoplasm</keyword>
<keyword id="KW-0251">Elongation factor</keyword>
<keyword id="KW-0648">Protein biosynthesis</keyword>
<keyword id="KW-1185">Reference proteome</keyword>
<sequence>MAITAQMVKELREKTGAGMMECKKALETSGGDFNKAIDILRQKGLATAQKKASREAKEGIITSYIHMDKIGVMLELNCETDFVARNEEFRQLAKDIAMQIAASNPQYIQREDIPQEVIEKEKEIYKSQIKGNKPPQVIEKIVEGKLEKFFEEMCLLDQPFIKEPEKKIKDLITEKVAKFGENIMVRRFVRFQVGQTQDE</sequence>
<dbReference type="EMBL" id="CP001147">
    <property type="protein sequence ID" value="ACI20484.1"/>
    <property type="molecule type" value="Genomic_DNA"/>
</dbReference>
<dbReference type="RefSeq" id="WP_012545220.1">
    <property type="nucleotide sequence ID" value="NC_011296.1"/>
</dbReference>
<dbReference type="RefSeq" id="YP_002249338.1">
    <property type="nucleotide sequence ID" value="NC_011296.1"/>
</dbReference>
<dbReference type="SMR" id="B5YGE0"/>
<dbReference type="FunCoup" id="B5YGE0">
    <property type="interactions" value="439"/>
</dbReference>
<dbReference type="STRING" id="289376.THEYE_A1542"/>
<dbReference type="EnsemblBacteria" id="ACI20484">
    <property type="protein sequence ID" value="ACI20484"/>
    <property type="gene ID" value="THEYE_A1542"/>
</dbReference>
<dbReference type="KEGG" id="tye:THEYE_A1542"/>
<dbReference type="PATRIC" id="fig|289376.4.peg.1500"/>
<dbReference type="eggNOG" id="COG0264">
    <property type="taxonomic scope" value="Bacteria"/>
</dbReference>
<dbReference type="HOGENOM" id="CLU_047155_1_1_0"/>
<dbReference type="InParanoid" id="B5YGE0"/>
<dbReference type="OrthoDB" id="9808348at2"/>
<dbReference type="Proteomes" id="UP000000718">
    <property type="component" value="Chromosome"/>
</dbReference>
<dbReference type="GO" id="GO:0005737">
    <property type="term" value="C:cytoplasm"/>
    <property type="evidence" value="ECO:0007669"/>
    <property type="project" value="UniProtKB-SubCell"/>
</dbReference>
<dbReference type="GO" id="GO:0003746">
    <property type="term" value="F:translation elongation factor activity"/>
    <property type="evidence" value="ECO:0000318"/>
    <property type="project" value="GO_Central"/>
</dbReference>
<dbReference type="GO" id="GO:0006414">
    <property type="term" value="P:translational elongation"/>
    <property type="evidence" value="ECO:0000318"/>
    <property type="project" value="GO_Central"/>
</dbReference>
<dbReference type="CDD" id="cd14275">
    <property type="entry name" value="UBA_EF-Ts"/>
    <property type="match status" value="1"/>
</dbReference>
<dbReference type="FunFam" id="1.10.286.20:FF:000001">
    <property type="entry name" value="Elongation factor Ts"/>
    <property type="match status" value="1"/>
</dbReference>
<dbReference type="FunFam" id="1.10.8.10:FF:000001">
    <property type="entry name" value="Elongation factor Ts"/>
    <property type="match status" value="1"/>
</dbReference>
<dbReference type="Gene3D" id="1.10.286.20">
    <property type="match status" value="1"/>
</dbReference>
<dbReference type="Gene3D" id="1.10.8.10">
    <property type="entry name" value="DNA helicase RuvA subunit, C-terminal domain"/>
    <property type="match status" value="1"/>
</dbReference>
<dbReference type="Gene3D" id="3.30.479.20">
    <property type="entry name" value="Elongation factor Ts, dimerisation domain"/>
    <property type="match status" value="1"/>
</dbReference>
<dbReference type="HAMAP" id="MF_00050">
    <property type="entry name" value="EF_Ts"/>
    <property type="match status" value="1"/>
</dbReference>
<dbReference type="InterPro" id="IPR036402">
    <property type="entry name" value="EF-Ts_dimer_sf"/>
</dbReference>
<dbReference type="InterPro" id="IPR001816">
    <property type="entry name" value="Transl_elong_EFTs/EF1B"/>
</dbReference>
<dbReference type="InterPro" id="IPR014039">
    <property type="entry name" value="Transl_elong_EFTs/EF1B_dimer"/>
</dbReference>
<dbReference type="InterPro" id="IPR018101">
    <property type="entry name" value="Transl_elong_Ts_CS"/>
</dbReference>
<dbReference type="InterPro" id="IPR009060">
    <property type="entry name" value="UBA-like_sf"/>
</dbReference>
<dbReference type="NCBIfam" id="TIGR00116">
    <property type="entry name" value="tsf"/>
    <property type="match status" value="1"/>
</dbReference>
<dbReference type="PANTHER" id="PTHR11741">
    <property type="entry name" value="ELONGATION FACTOR TS"/>
    <property type="match status" value="1"/>
</dbReference>
<dbReference type="PANTHER" id="PTHR11741:SF0">
    <property type="entry name" value="ELONGATION FACTOR TS, MITOCHONDRIAL"/>
    <property type="match status" value="1"/>
</dbReference>
<dbReference type="Pfam" id="PF00889">
    <property type="entry name" value="EF_TS"/>
    <property type="match status" value="1"/>
</dbReference>
<dbReference type="SUPFAM" id="SSF54713">
    <property type="entry name" value="Elongation factor Ts (EF-Ts), dimerisation domain"/>
    <property type="match status" value="1"/>
</dbReference>
<dbReference type="SUPFAM" id="SSF46934">
    <property type="entry name" value="UBA-like"/>
    <property type="match status" value="1"/>
</dbReference>
<dbReference type="PROSITE" id="PS01126">
    <property type="entry name" value="EF_TS_1"/>
    <property type="match status" value="1"/>
</dbReference>
<dbReference type="PROSITE" id="PS01127">
    <property type="entry name" value="EF_TS_2"/>
    <property type="match status" value="1"/>
</dbReference>
<evidence type="ECO:0000255" key="1">
    <source>
        <dbReference type="HAMAP-Rule" id="MF_00050"/>
    </source>
</evidence>
<comment type="function">
    <text evidence="1">Associates with the EF-Tu.GDP complex and induces the exchange of GDP to GTP. It remains bound to the aminoacyl-tRNA.EF-Tu.GTP complex up to the GTP hydrolysis stage on the ribosome.</text>
</comment>
<comment type="subcellular location">
    <subcellularLocation>
        <location evidence="1">Cytoplasm</location>
    </subcellularLocation>
</comment>
<comment type="similarity">
    <text evidence="1">Belongs to the EF-Ts family.</text>
</comment>
<gene>
    <name evidence="1" type="primary">tsf</name>
    <name type="ordered locus">THEYE_A1542</name>
</gene>
<feature type="chain" id="PRO_1000189893" description="Elongation factor Ts">
    <location>
        <begin position="1"/>
        <end position="199"/>
    </location>
</feature>
<feature type="region of interest" description="Involved in Mg(2+) ion dislocation from EF-Tu" evidence="1">
    <location>
        <begin position="80"/>
        <end position="83"/>
    </location>
</feature>
<name>EFTS_THEYD</name>
<proteinExistence type="inferred from homology"/>
<accession>B5YGE0</accession>
<reference key="1">
    <citation type="submission" date="2008-08" db="EMBL/GenBank/DDBJ databases">
        <title>The complete genome sequence of Thermodesulfovibrio yellowstonii strain ATCC 51303 / DSM 11347 / YP87.</title>
        <authorList>
            <person name="Dodson R.J."/>
            <person name="Durkin A.S."/>
            <person name="Wu M."/>
            <person name="Eisen J."/>
            <person name="Sutton G."/>
        </authorList>
    </citation>
    <scope>NUCLEOTIDE SEQUENCE [LARGE SCALE GENOMIC DNA]</scope>
    <source>
        <strain>ATCC 51303 / DSM 11347 / YP87</strain>
    </source>
</reference>
<organism>
    <name type="scientific">Thermodesulfovibrio yellowstonii (strain ATCC 51303 / DSM 11347 / YP87)</name>
    <dbReference type="NCBI Taxonomy" id="289376"/>
    <lineage>
        <taxon>Bacteria</taxon>
        <taxon>Pseudomonadati</taxon>
        <taxon>Nitrospirota</taxon>
        <taxon>Thermodesulfovibrionia</taxon>
        <taxon>Thermodesulfovibrionales</taxon>
        <taxon>Thermodesulfovibrionaceae</taxon>
        <taxon>Thermodesulfovibrio</taxon>
    </lineage>
</organism>
<protein>
    <recommendedName>
        <fullName evidence="1">Elongation factor Ts</fullName>
        <shortName evidence="1">EF-Ts</shortName>
    </recommendedName>
</protein>